<organism>
    <name type="scientific">Penicillium brasilianum</name>
    <dbReference type="NCBI Taxonomy" id="104259"/>
    <lineage>
        <taxon>Eukaryota</taxon>
        <taxon>Fungi</taxon>
        <taxon>Dikarya</taxon>
        <taxon>Ascomycota</taxon>
        <taxon>Pezizomycotina</taxon>
        <taxon>Eurotiomycetes</taxon>
        <taxon>Eurotiomycetidae</taxon>
        <taxon>Eurotiales</taxon>
        <taxon>Aspergillaceae</taxon>
        <taxon>Penicillium</taxon>
    </lineage>
</organism>
<feature type="chain" id="PRO_0000453829" description="Austinoid biosynthesis clusters protein F">
    <location>
        <begin position="1"/>
        <end position="151"/>
    </location>
</feature>
<comment type="function">
    <text evidence="2 3">Part of the gene cluster B that mediates the biosynthesis of the fungal meroterpenoid acetoxydehydroaustin (PubMed:29076725). The first step of the pathway is the synthesis of 3,5-dimethylorsellinic acid by the polyketide synthase ausA (By similarity). 3,5-dimethylorsellinic acid is then prenylated by the polyprenyl transferase ausN (By similarity). Further epoxidation by the FAD-dependent monooxygenase ausM and cyclization by the probable terpene cyclase ausL lead to the formation of protoaustinoid A (By similarity). Protoaustinoid A is then oxidized to spiro-lactone preaustinoid A3 by the combined action of the FAD-binding monooxygenases ausB and ausC, and the dioxygenase ausE (By similarity). Acid-catalyzed keto-rearrangement and ring contraction of the tetraketide portion of preaustinoid A3 by ausJ lead to the formation of preaustinoid A4 (By similarity). The aldo-keto reductase ausK, with the help of ausH, is involved in the next step by transforming preaustinoid A4 into isoaustinone which is in turn hydroxylated by the P450 monooxygenase ausI to form austinolide (By similarity). The cytochrome P450 monooxygenase ausG then modifies austinolide to austinol (By similarity). Austinol is further acetylated to austin by the O-acetyltransferase ausP, which spontaneously changes to dehydroaustin (PubMed:29076725). The cytochrome P450 monooxygenase then converts dehydroaustin is into 7-dehydrodehydroaustin (PubMed:29076725). The hydroxylation catalyzed by ausR permits the second O-acetyltransferase ausQ to add an additional acetyl group to the molecule, leading to the formation of acetoxydehydroaustin (PubMed:29076725). Due to genetic rearrangements of the clusters and the subsequent loss of some enzymes, the end product of the Penicillium brasilianum austinoid biosynthesis clusters is acetoxydehydroaustin (PubMed:29076725).</text>
</comment>
<comment type="pathway">
    <text evidence="6">Secondary metabolite biosynthesis; terpenoid biosynthesis.</text>
</comment>
<comment type="subunit">
    <text evidence="1">Homodimer.</text>
</comment>
<comment type="miscellaneous">
    <text evidence="6">In A.calidoustus, the austinoid gene cluster lies on a contiguous DNA region, while clusters from E.nidulans and P.brasilianum are split in their respective genomes. Genetic rearrangements provoked variability among the clusters and E.nidulans produces the least number of austionoid derivatives with the end products austinol and dehydroaustinol, while P.brasilianum can produce until acetoxydehydroaustin, and A.calidoustus produces the highest number of identified derivatives.</text>
</comment>
<comment type="similarity">
    <text evidence="5">Belongs to the trt14 isomerase family.</text>
</comment>
<protein>
    <recommendedName>
        <fullName evidence="4">Austinoid biosynthesis clusters protein F</fullName>
    </recommendedName>
</protein>
<reference key="1">
    <citation type="journal article" date="2015" name="Genome Announc.">
        <title>Draft genome sequence of the fungus Penicillium brasilianum MG11.</title>
        <authorList>
            <person name="Horn F."/>
            <person name="Linde J."/>
            <person name="Mattern D.J."/>
            <person name="Walther G."/>
            <person name="Guthke R."/>
            <person name="Brakhage A.A."/>
            <person name="Valiante V."/>
        </authorList>
    </citation>
    <scope>NUCLEOTIDE SEQUENCE [LARGE SCALE GENOMIC DNA]</scope>
    <source>
        <strain>MG11</strain>
    </source>
</reference>
<reference key="2">
    <citation type="journal article" date="2016" name="J. Am. Chem. Soc.">
        <title>Discovery of key dioxygenases that diverged the paraherquonin and acetoxydehydroaustin pathways in Penicillium brasilianum.</title>
        <authorList>
            <person name="Matsuda Y."/>
            <person name="Iwabuchi T."/>
            <person name="Fujimoto T."/>
            <person name="Awakawa T."/>
            <person name="Nakashima Y."/>
            <person name="Mori T."/>
            <person name="Zhang H."/>
            <person name="Hayashi F."/>
            <person name="Abe I."/>
        </authorList>
    </citation>
    <scope>FUNCTION</scope>
</reference>
<reference key="3">
    <citation type="journal article" date="2017" name="ACS Chem. Biol.">
        <title>Rewiring of the austinoid biosynthetic pathway in filamentous fungi.</title>
        <authorList>
            <person name="Mattern D.J."/>
            <person name="Valiante V."/>
            <person name="Horn F."/>
            <person name="Petzke L."/>
            <person name="Brakhage A.A."/>
        </authorList>
    </citation>
    <scope>FUNCTION</scope>
</reference>
<sequence length="151" mass="17477">MSTTREKLLATTTKFVSAFGSFDIEEMLNIRTPTCLYHQCCPSFDKNVVTNEETRASFPQFIATFKRFDFSILEPDHTLVDEAARKVMIRAKTSAESIVGAYENEYIFILKMTDDCRLIEEIHEFYDTIRLKDLQHRLEANRISFGDAAPF</sequence>
<name>AUSF_PENBI</name>
<gene>
    <name evidence="4" type="primary">ausF</name>
    <name type="ORF">PMG11_06808</name>
</gene>
<evidence type="ECO:0000250" key="1">
    <source>
        <dbReference type="UniProtKB" id="Q5AR31"/>
    </source>
</evidence>
<evidence type="ECO:0000250" key="2">
    <source>
        <dbReference type="UniProtKB" id="Q5AR33"/>
    </source>
</evidence>
<evidence type="ECO:0000269" key="3">
    <source>
    </source>
</evidence>
<evidence type="ECO:0000303" key="4">
    <source>
    </source>
</evidence>
<evidence type="ECO:0000305" key="5"/>
<evidence type="ECO:0000305" key="6">
    <source>
    </source>
</evidence>
<dbReference type="EMBL" id="CDHK01000006">
    <property type="protein sequence ID" value="CEJ58138.1"/>
    <property type="molecule type" value="Genomic_DNA"/>
</dbReference>
<dbReference type="SMR" id="A0A0F7TN06"/>
<dbReference type="STRING" id="104259.A0A0F7TN06"/>
<dbReference type="OrthoDB" id="3758478at2759"/>
<dbReference type="UniPathway" id="UPA00213"/>
<dbReference type="Proteomes" id="UP000042958">
    <property type="component" value="Unassembled WGS sequence"/>
</dbReference>
<dbReference type="GO" id="GO:0016114">
    <property type="term" value="P:terpenoid biosynthetic process"/>
    <property type="evidence" value="ECO:0007669"/>
    <property type="project" value="UniProtKB-UniPathway"/>
</dbReference>
<dbReference type="Gene3D" id="3.10.450.50">
    <property type="match status" value="1"/>
</dbReference>
<dbReference type="InterPro" id="IPR050977">
    <property type="entry name" value="Fungal_Meroterpenoid_Isomerase"/>
</dbReference>
<dbReference type="InterPro" id="IPR032710">
    <property type="entry name" value="NTF2-like_dom_sf"/>
</dbReference>
<dbReference type="PANTHER" id="PTHR39598:SF1">
    <property type="entry name" value="AUSTINOID BIOSYNTHESIS CLUSTERS PROTEIN F-RELATED"/>
    <property type="match status" value="1"/>
</dbReference>
<dbReference type="PANTHER" id="PTHR39598">
    <property type="entry name" value="AUSTINOL SYNTHESIS PROTEIN F-RELATED"/>
    <property type="match status" value="1"/>
</dbReference>
<dbReference type="SUPFAM" id="SSF54427">
    <property type="entry name" value="NTF2-like"/>
    <property type="match status" value="1"/>
</dbReference>
<keyword id="KW-1185">Reference proteome</keyword>
<proteinExistence type="inferred from homology"/>
<accession>A0A0F7TN06</accession>